<dbReference type="EMBL" id="CU928164">
    <property type="protein sequence ID" value="CAR19112.1"/>
    <property type="molecule type" value="Genomic_DNA"/>
</dbReference>
<dbReference type="RefSeq" id="WP_000055108.1">
    <property type="nucleotide sequence ID" value="NC_011750.1"/>
</dbReference>
<dbReference type="RefSeq" id="YP_002408921.1">
    <property type="nucleotide sequence ID" value="NC_011750.1"/>
</dbReference>
<dbReference type="STRING" id="585057.ECIAI39_2993"/>
<dbReference type="KEGG" id="ect:ECIAI39_2993"/>
<dbReference type="PATRIC" id="fig|585057.6.peg.3106"/>
<dbReference type="HOGENOM" id="CLU_049711_0_0_6"/>
<dbReference type="UniPathway" id="UPA00566"/>
<dbReference type="Proteomes" id="UP000000749">
    <property type="component" value="Chromosome"/>
</dbReference>
<dbReference type="GO" id="GO:0005886">
    <property type="term" value="C:plasma membrane"/>
    <property type="evidence" value="ECO:0007669"/>
    <property type="project" value="UniProtKB-SubCell"/>
</dbReference>
<dbReference type="GO" id="GO:0009246">
    <property type="term" value="P:enterobacterial common antigen biosynthetic process"/>
    <property type="evidence" value="ECO:0007669"/>
    <property type="project" value="UniProtKB-UniRule"/>
</dbReference>
<dbReference type="HAMAP" id="MF_01003">
    <property type="entry name" value="WzyE"/>
    <property type="match status" value="1"/>
</dbReference>
<dbReference type="InterPro" id="IPR010691">
    <property type="entry name" value="WzyE"/>
</dbReference>
<dbReference type="NCBIfam" id="NF002820">
    <property type="entry name" value="PRK02975.1"/>
    <property type="match status" value="1"/>
</dbReference>
<dbReference type="Pfam" id="PF06899">
    <property type="entry name" value="WzyE"/>
    <property type="match status" value="1"/>
</dbReference>
<reference key="1">
    <citation type="journal article" date="2009" name="PLoS Genet.">
        <title>Organised genome dynamics in the Escherichia coli species results in highly diverse adaptive paths.</title>
        <authorList>
            <person name="Touchon M."/>
            <person name="Hoede C."/>
            <person name="Tenaillon O."/>
            <person name="Barbe V."/>
            <person name="Baeriswyl S."/>
            <person name="Bidet P."/>
            <person name="Bingen E."/>
            <person name="Bonacorsi S."/>
            <person name="Bouchier C."/>
            <person name="Bouvet O."/>
            <person name="Calteau A."/>
            <person name="Chiapello H."/>
            <person name="Clermont O."/>
            <person name="Cruveiller S."/>
            <person name="Danchin A."/>
            <person name="Diard M."/>
            <person name="Dossat C."/>
            <person name="Karoui M.E."/>
            <person name="Frapy E."/>
            <person name="Garry L."/>
            <person name="Ghigo J.M."/>
            <person name="Gilles A.M."/>
            <person name="Johnson J."/>
            <person name="Le Bouguenec C."/>
            <person name="Lescat M."/>
            <person name="Mangenot S."/>
            <person name="Martinez-Jehanne V."/>
            <person name="Matic I."/>
            <person name="Nassif X."/>
            <person name="Oztas S."/>
            <person name="Petit M.A."/>
            <person name="Pichon C."/>
            <person name="Rouy Z."/>
            <person name="Ruf C.S."/>
            <person name="Schneider D."/>
            <person name="Tourret J."/>
            <person name="Vacherie B."/>
            <person name="Vallenet D."/>
            <person name="Medigue C."/>
            <person name="Rocha E.P.C."/>
            <person name="Denamur E."/>
        </authorList>
    </citation>
    <scope>NUCLEOTIDE SEQUENCE [LARGE SCALE GENOMIC DNA]</scope>
    <source>
        <strain>IAI39 / ExPEC</strain>
    </source>
</reference>
<proteinExistence type="inferred from homology"/>
<name>WZYE_ECO7I</name>
<organism>
    <name type="scientific">Escherichia coli O7:K1 (strain IAI39 / ExPEC)</name>
    <dbReference type="NCBI Taxonomy" id="585057"/>
    <lineage>
        <taxon>Bacteria</taxon>
        <taxon>Pseudomonadati</taxon>
        <taxon>Pseudomonadota</taxon>
        <taxon>Gammaproteobacteria</taxon>
        <taxon>Enterobacterales</taxon>
        <taxon>Enterobacteriaceae</taxon>
        <taxon>Escherichia</taxon>
    </lineage>
</organism>
<gene>
    <name evidence="1" type="primary">wzyE</name>
    <name type="ordered locus">ECIAI39_2993</name>
</gene>
<accession>B7NTE8</accession>
<sequence>MSLLQFSGLFVVWLLCTLFIATLTWFEFRRMRFNFNVFFSLLFLLTFFFGFPLTSVLVFRFDVGVAPPEILLQALLSAGCFYAVYYVTYKTRLRKRVADVPRRPLFTMNRVETNLTWVILMGIALVSVGIFFMHNGFLLFRLNSYSQIFSSEVSGVALKRFFYFFIPAMLVVYFLRQDSKAWLFFLVSTVAFGLLTYMIVGGTRANIIIAFAIFLFIGIIRGWISLWMLAAAGVLGIVGMFWLALKRYGMNVSGDEAFYTFLYLTRDTFSPWENLALLLQNYDNIDFQGLAPIVRDFYVFIPSWLWPGRPSMVLNSANYFTWEVLNNHSGLAISPTLIGSLVVMGGALFIPLGAIVVGLIIKWFDWLYELGNRETNRYKAAILHSFCFGAIFNMIVLAREGLDSFVSRVVFFIVVFGACLMIAKLLYWLFESAGLIHKRTKSSLRTQVEG</sequence>
<evidence type="ECO:0000255" key="1">
    <source>
        <dbReference type="HAMAP-Rule" id="MF_01003"/>
    </source>
</evidence>
<keyword id="KW-0997">Cell inner membrane</keyword>
<keyword id="KW-1003">Cell membrane</keyword>
<keyword id="KW-0472">Membrane</keyword>
<keyword id="KW-0812">Transmembrane</keyword>
<keyword id="KW-1133">Transmembrane helix</keyword>
<comment type="function">
    <text evidence="1">Probably involved in the polymerization of enterobacterial common antigen (ECA) trisaccharide repeat units.</text>
</comment>
<comment type="pathway">
    <text evidence="1">Bacterial outer membrane biogenesis; enterobacterial common antigen biosynthesis.</text>
</comment>
<comment type="subunit">
    <text evidence="1">Probably part of a complex composed of WzxE, WzyE and WzzE.</text>
</comment>
<comment type="subcellular location">
    <subcellularLocation>
        <location evidence="1">Cell inner membrane</location>
        <topology evidence="1">Multi-pass membrane protein</topology>
    </subcellularLocation>
</comment>
<comment type="similarity">
    <text evidence="1">Belongs to the WzyE family.</text>
</comment>
<protein>
    <recommendedName>
        <fullName evidence="1">Probable ECA polymerase</fullName>
    </recommendedName>
</protein>
<feature type="chain" id="PRO_1000200209" description="Probable ECA polymerase">
    <location>
        <begin position="1"/>
        <end position="450"/>
    </location>
</feature>
<feature type="transmembrane region" description="Helical" evidence="1">
    <location>
        <begin position="6"/>
        <end position="26"/>
    </location>
</feature>
<feature type="transmembrane region" description="Helical" evidence="1">
    <location>
        <begin position="37"/>
        <end position="57"/>
    </location>
</feature>
<feature type="transmembrane region" description="Helical" evidence="1">
    <location>
        <begin position="63"/>
        <end position="83"/>
    </location>
</feature>
<feature type="transmembrane region" description="Helical" evidence="1">
    <location>
        <begin position="118"/>
        <end position="138"/>
    </location>
</feature>
<feature type="transmembrane region" description="Helical" evidence="1">
    <location>
        <begin position="155"/>
        <end position="175"/>
    </location>
</feature>
<feature type="transmembrane region" description="Helical" evidence="1">
    <location>
        <begin position="181"/>
        <end position="201"/>
    </location>
</feature>
<feature type="transmembrane region" description="Helical" evidence="1">
    <location>
        <begin position="207"/>
        <end position="227"/>
    </location>
</feature>
<feature type="transmembrane region" description="Helical" evidence="1">
    <location>
        <begin position="228"/>
        <end position="248"/>
    </location>
</feature>
<feature type="transmembrane region" description="Helical" evidence="1">
    <location>
        <begin position="341"/>
        <end position="361"/>
    </location>
</feature>
<feature type="transmembrane region" description="Helical" evidence="1">
    <location>
        <begin position="378"/>
        <end position="398"/>
    </location>
</feature>
<feature type="transmembrane region" description="Helical" evidence="1">
    <location>
        <begin position="410"/>
        <end position="430"/>
    </location>
</feature>